<gene>
    <name type="primary">PIR1</name>
    <name type="synonym">PIR2</name>
    <name type="ordered locus">CAALFM_C208870CA</name>
    <name type="ORF">CaO19.220</name>
    <name type="ORF">CaO19.7851</name>
</gene>
<proteinExistence type="evidence at protein level"/>
<organism>
    <name type="scientific">Candida albicans (strain SC5314 / ATCC MYA-2876)</name>
    <name type="common">Yeast</name>
    <dbReference type="NCBI Taxonomy" id="237561"/>
    <lineage>
        <taxon>Eukaryota</taxon>
        <taxon>Fungi</taxon>
        <taxon>Dikarya</taxon>
        <taxon>Ascomycota</taxon>
        <taxon>Saccharomycotina</taxon>
        <taxon>Pichiomycetes</taxon>
        <taxon>Debaryomycetaceae</taxon>
        <taxon>Candida/Lodderomyces clade</taxon>
        <taxon>Candida</taxon>
    </lineage>
</organism>
<comment type="function">
    <text evidence="11">Component of the outer cell wall layer required for stability of the cell wall and specifically for cell wall rigidity.</text>
</comment>
<comment type="subcellular location">
    <subcellularLocation>
        <location evidence="5 6 9 11 15 17">Secreted</location>
        <location evidence="5 6 9 11 15 17">Cell wall</location>
    </subcellularLocation>
    <text>Covalently attached to the cell wall.</text>
</comment>
<comment type="induction">
    <text evidence="7 8 10 13 14 15 16 17">Expression varies during the cell-cycle with a peak at the beginning of G1. Expression increases in hypoxic and acidic conditions and is down-regulated during the switch from yeast to hyphal growth and under low-iron conditions. The promoter contains E-box consensus sequences (CANNTG) suggesting that PIR1 is directly regulated by EFG1. Expression is also regulated by ACE2, HOG1, and RIM101.</text>
</comment>
<comment type="domain">
    <text evidence="1">The PIR1/2/3 repeats are required for covalent linkage to the cell wall.</text>
</comment>
<comment type="PTM">
    <text evidence="1">Covalently linked to beta-1,3-glucan of the inner cell wall layer via an alkali-sensitive ester linkage between the gamma-carboxyl group of glutamic acids, arising from specific glutamines within the PIR1/2/3 repeats, and hydroxyl groups of glucoses of beta-1,3-glucan chains.</text>
</comment>
<comment type="PTM">
    <text evidence="11 12">Highly O-glycosylated by PMT1 and contains one N-mannosylated chain.</text>
</comment>
<comment type="disruption phenotype">
    <text evidence="11">Increases sensitivity to calcofluor white and Congo red.</text>
</comment>
<comment type="similarity">
    <text evidence="18">Belongs to the PIR protein family.</text>
</comment>
<protein>
    <recommendedName>
        <fullName>Cell wall mannoprotein PIR1</fullName>
    </recommendedName>
    <alternativeName>
        <fullName>Protein with internal repeats 1</fullName>
    </alternativeName>
</protein>
<accession>Q59SF7</accession>
<accession>A0A1D8PIA7</accession>
<accession>Q59SC4</accession>
<keyword id="KW-0134">Cell wall</keyword>
<keyword id="KW-0961">Cell wall biogenesis/degradation</keyword>
<keyword id="KW-0325">Glycoprotein</keyword>
<keyword id="KW-1185">Reference proteome</keyword>
<keyword id="KW-0677">Repeat</keyword>
<keyword id="KW-0964">Secreted</keyword>
<keyword id="KW-0732">Signal</keyword>
<name>PIR1_CANAL</name>
<sequence>MKYSTLVSIAAFISTSLAATVPDEHYSTLSPSAKIPSGASTDFSGTFGIQVVTVESASALSTDTATSTLTRNDNKKEATPVAQITDGQVQHQTTGGVSAIKQISDGQVQHQTNAAQPIAQISDGQIQHQTTAKATATPVQQINDGQIQHQTTVQPVAQISDGQIQHQTAKATATPVQQIGDGQIQHQTTVQPVAQISDGQIQHQTVKASATPVQQIGDGQIQHQTTAAAATTASAVKQINDGQIQHQTTTAENVAKAQSDGQAIATGSPSSNSTLSDDDDLSSTIPKACSSANNLEMTLHDSVLKDTHERWGAIVANHQFQFDGPIPQAGTIYSAGWSIKDGYLYLGDSNIFYQCLSGDFYNLYDENVAKQCSAVKLSVIEFVNC</sequence>
<feature type="signal peptide" evidence="2">
    <location>
        <begin position="1"/>
        <end position="18"/>
    </location>
</feature>
<feature type="chain" id="PRO_0000428629" description="Cell wall mannoprotein PIR1">
    <location>
        <begin position="19"/>
        <end position="385"/>
    </location>
</feature>
<feature type="repeat" description="PIR1/2/3 1" evidence="3">
    <location>
        <begin position="78"/>
        <end position="96"/>
    </location>
</feature>
<feature type="repeat" description="PIR1/2/3 2" evidence="3">
    <location>
        <begin position="97"/>
        <end position="115"/>
    </location>
</feature>
<feature type="repeat" description="PIR1/2/3 3" evidence="3">
    <location>
        <begin position="116"/>
        <end position="133"/>
    </location>
</feature>
<feature type="repeat" description="PIR1/2/3 4" evidence="3">
    <location>
        <begin position="136"/>
        <end position="153"/>
    </location>
</feature>
<feature type="repeat" description="PIR1/2/3 5" evidence="3">
    <location>
        <begin position="154"/>
        <end position="171"/>
    </location>
</feature>
<feature type="repeat" description="PIR1/2/3 6" evidence="3">
    <location>
        <begin position="173"/>
        <end position="190"/>
    </location>
</feature>
<feature type="repeat" description="PIR1/2/3 7" evidence="3">
    <location>
        <begin position="191"/>
        <end position="208"/>
    </location>
</feature>
<feature type="repeat" description="PIR1/2/3 8" evidence="3">
    <location>
        <begin position="210"/>
        <end position="228"/>
    </location>
</feature>
<feature type="repeat" description="PIR1/2/3 9" evidence="3">
    <location>
        <begin position="233"/>
        <end position="251"/>
    </location>
</feature>
<feature type="region of interest" description="Disordered" evidence="4">
    <location>
        <begin position="257"/>
        <end position="282"/>
    </location>
</feature>
<feature type="site" description="Covalent attachment to cell wall glycan" evidence="1">
    <location>
        <position position="88"/>
    </location>
</feature>
<feature type="site" description="Covalent attachment to cell wall glycan" evidence="1">
    <location>
        <position position="107"/>
    </location>
</feature>
<feature type="site" description="Covalent attachment to cell wall glycan" evidence="1">
    <location>
        <position position="125"/>
    </location>
</feature>
<feature type="site" description="Covalent attachment to cell wall glycan" evidence="1">
    <location>
        <position position="146"/>
    </location>
</feature>
<feature type="site" description="Covalent attachment to cell wall glycan" evidence="1">
    <location>
        <position position="163"/>
    </location>
</feature>
<feature type="site" description="Covalent attachment to cell wall glycan" evidence="1">
    <location>
        <position position="183"/>
    </location>
</feature>
<feature type="site" description="Covalent attachment to cell wall glycan" evidence="1">
    <location>
        <position position="200"/>
    </location>
</feature>
<feature type="site" description="Covalent attachment to cell wall glycan" evidence="1">
    <location>
        <position position="220"/>
    </location>
</feature>
<feature type="site" description="Covalent attachment to cell wall glycan" evidence="1">
    <location>
        <position position="243"/>
    </location>
</feature>
<feature type="glycosylation site" description="N-linked (GlcNAc...) asparagine" evidence="2">
    <location>
        <position position="272"/>
    </location>
</feature>
<reference key="1">
    <citation type="journal article" date="2004" name="Proc. Natl. Acad. Sci. U.S.A.">
        <title>The diploid genome sequence of Candida albicans.</title>
        <authorList>
            <person name="Jones T."/>
            <person name="Federspiel N.A."/>
            <person name="Chibana H."/>
            <person name="Dungan J."/>
            <person name="Kalman S."/>
            <person name="Magee B.B."/>
            <person name="Newport G."/>
            <person name="Thorstenson Y.R."/>
            <person name="Agabian N."/>
            <person name="Magee P.T."/>
            <person name="Davis R.W."/>
            <person name="Scherer S."/>
        </authorList>
    </citation>
    <scope>NUCLEOTIDE SEQUENCE [LARGE SCALE GENOMIC DNA]</scope>
    <source>
        <strain>SC5314 / ATCC MYA-2876</strain>
    </source>
</reference>
<reference key="2">
    <citation type="journal article" date="2007" name="Genome Biol.">
        <title>Assembly of the Candida albicans genome into sixteen supercontigs aligned on the eight chromosomes.</title>
        <authorList>
            <person name="van het Hoog M."/>
            <person name="Rast T.J."/>
            <person name="Martchenko M."/>
            <person name="Grindle S."/>
            <person name="Dignard D."/>
            <person name="Hogues H."/>
            <person name="Cuomo C."/>
            <person name="Berriman M."/>
            <person name="Scherer S."/>
            <person name="Magee B.B."/>
            <person name="Whiteway M."/>
            <person name="Chibana H."/>
            <person name="Nantel A."/>
            <person name="Magee P.T."/>
        </authorList>
    </citation>
    <scope>GENOME REANNOTATION</scope>
    <source>
        <strain>SC5314 / ATCC MYA-2876</strain>
    </source>
</reference>
<reference key="3">
    <citation type="journal article" date="2013" name="Genome Biol.">
        <title>Assembly of a phased diploid Candida albicans genome facilitates allele-specific measurements and provides a simple model for repeat and indel structure.</title>
        <authorList>
            <person name="Muzzey D."/>
            <person name="Schwartz K."/>
            <person name="Weissman J.S."/>
            <person name="Sherlock G."/>
        </authorList>
    </citation>
    <scope>NUCLEOTIDE SEQUENCE [LARGE SCALE GENOMIC DNA]</scope>
    <scope>GENOME REANNOTATION</scope>
    <source>
        <strain>SC5314 / ATCC MYA-2876</strain>
    </source>
</reference>
<reference key="4">
    <citation type="journal article" date="2000" name="FEMS Microbiol. Lett.">
        <title>Evidence for the presence of pir-like proteins in Candida albicans.</title>
        <authorList>
            <person name="Kandasamy R."/>
            <person name="Vediyappan G."/>
            <person name="Chaffin W.L."/>
        </authorList>
    </citation>
    <scope>IDENTIFICATION</scope>
    <scope>SUBCELLULAR LOCATION</scope>
</reference>
<reference key="5">
    <citation type="journal article" date="2000" name="Mol. Microbiol.">
        <title>The cell wall architecture of Candida albicans wild-type cells and cell wall-defective mutants.</title>
        <authorList>
            <person name="Kapteyn J.C."/>
            <person name="Hoyer L.L."/>
            <person name="Hecht J.E."/>
            <person name="Muller W.H."/>
            <person name="Andel A."/>
            <person name="Verkleij A.J."/>
            <person name="Makarow M."/>
            <person name="Van Den Ende H."/>
            <person name="Klis F.M."/>
        </authorList>
    </citation>
    <scope>IDENTIFICATION</scope>
    <scope>SUBCELLULAR LOCATION</scope>
</reference>
<reference key="6">
    <citation type="journal article" date="2003" name="Mol. Microbiol.">
        <title>EFG1 is a major regulator of cell wall dynamics in Candida albicans as revealed by DNA microarrays.</title>
        <authorList>
            <person name="Sohn K."/>
            <person name="Urban C."/>
            <person name="Brunner H."/>
            <person name="Rupp S."/>
        </authorList>
    </citation>
    <scope>INDUCTION</scope>
</reference>
<reference key="7">
    <citation type="journal article" date="2004" name="Eukaryot. Cell">
        <title>RBR1, a novel pH-regulated cell wall gene of Candida albicans, is repressed by RIM101 and activated by NRG1.</title>
        <authorList>
            <person name="Lotz H."/>
            <person name="Sohn K."/>
            <person name="Brunner H."/>
            <person name="Muhlschlegel F.A."/>
            <person name="Rupp S."/>
        </authorList>
    </citation>
    <scope>INDUCTION</scope>
</reference>
<reference key="8">
    <citation type="journal article" date="2004" name="Eukaryot. Cell">
        <title>Proteomic analysis of Candida albicans cell walls reveals covalently bound carbohydrate-active enzymes and adhesins.</title>
        <authorList>
            <person name="de Groot P.W."/>
            <person name="de Boer A.D."/>
            <person name="Cunningham J."/>
            <person name="Dekker H.L."/>
            <person name="de Jong L."/>
            <person name="Hellingwerf K.J."/>
            <person name="de Koster C."/>
            <person name="Klis F.M."/>
        </authorList>
    </citation>
    <scope>IDENTIFICATION BY MASS SPECTROMETRY</scope>
    <scope>SUBCELLULAR LOCATION</scope>
</reference>
<reference key="9">
    <citation type="journal article" date="2004" name="Microbiology">
        <title>Role of Pir1 in the construction of the Candida albicans cell wall.</title>
        <authorList>
            <person name="Martinez A.I."/>
            <person name="Castillo L."/>
            <person name="Garcera A."/>
            <person name="Elorza M.V."/>
            <person name="Valentin E."/>
            <person name="Sentandreu R."/>
        </authorList>
    </citation>
    <scope>FUNCTION</scope>
    <scope>GLYCOSYLATION</scope>
    <scope>DISRUPTION PHENOTYPE</scope>
    <scope>SUBCELLULAR LOCATION</scope>
</reference>
<reference key="10">
    <citation type="journal article" date="2004" name="Mol. Microbiol.">
        <title>Regulatory networks affected by iron availability in Candida albicans.</title>
        <authorList>
            <person name="Lan C.Y."/>
            <person name="Rodarte G."/>
            <person name="Murillo L.A."/>
            <person name="Jones T."/>
            <person name="Davis R.W."/>
            <person name="Dungan J."/>
            <person name="Newport G."/>
            <person name="Agabian N."/>
        </authorList>
    </citation>
    <scope>INDUCTION</scope>
</reference>
<reference key="11">
    <citation type="journal article" date="2005" name="Mol. Microbiol.">
        <title>PMT family of Candida albicans: five protein mannosyltransferase isoforms affect growth, morphogenesis and antifungal resistance.</title>
        <authorList>
            <person name="Prill S.K."/>
            <person name="Klinkert B."/>
            <person name="Timpel C."/>
            <person name="Gale C.A."/>
            <person name="Schroppel K."/>
            <person name="Ernst J.F."/>
        </authorList>
    </citation>
    <scope>GLYCOSYLATION BY PMT1</scope>
</reference>
<reference key="12">
    <citation type="journal article" date="2006" name="Eukaryot. Cell">
        <title>Candida albicans transcription factor Ace2 regulates metabolism and is required for filamentation in hypoxic conditions.</title>
        <authorList>
            <person name="Mulhern S.M."/>
            <person name="Logue M.E."/>
            <person name="Butler G."/>
        </authorList>
    </citation>
    <scope>INDUCTION</scope>
</reference>
<reference key="13">
    <citation type="journal article" date="2006" name="Mol. Biol. Cell">
        <title>Role of the Hog1 stress-activated protein kinase in the global transcriptional response to stress in the fungal pathogen Candida albicans.</title>
        <authorList>
            <person name="Enjalbert B."/>
            <person name="Smith D.A."/>
            <person name="Cornell M.J."/>
            <person name="Alam I."/>
            <person name="Nicholls S."/>
            <person name="Brown A.J.P."/>
            <person name="Quinn J."/>
        </authorList>
    </citation>
    <scope>INDUCTION</scope>
</reference>
<reference key="14">
    <citation type="journal article" date="2009" name="Mol. Biol. Cell">
        <title>Transcriptional analysis of the Candida albicans cell cycle.</title>
        <authorList>
            <person name="Cote P."/>
            <person name="Hogues H."/>
            <person name="Whiteway M."/>
        </authorList>
    </citation>
    <scope>INDUCTION</scope>
</reference>
<reference key="15">
    <citation type="journal article" date="2008" name="Microbiology">
        <title>Hypoxic conditions and iron restriction affect the cell-wall proteome of Candida albicans grown under vagina-simulative conditions.</title>
        <authorList>
            <person name="Sosinska G.J."/>
            <person name="de Groot P.W."/>
            <person name="Teixeira de Mattos M.J."/>
            <person name="Dekker H.L."/>
            <person name="de Koster C.G."/>
            <person name="Hellingwerf K.J."/>
            <person name="Klis F.M."/>
        </authorList>
    </citation>
    <scope>IDENTIFICATION BY MASS SPECTROMETRY</scope>
    <scope>SUBCELLULAR LOCATION</scope>
    <scope>INDUCTION</scope>
</reference>
<reference key="16">
    <citation type="journal article" date="2010" name="Yeast">
        <title>Mass spectrometric analysis of the secretome of Candida albicans.</title>
        <authorList>
            <person name="Sorgo A.G."/>
            <person name="Heilmann C.J."/>
            <person name="Dekker H.L."/>
            <person name="Brul S."/>
            <person name="de Koster C.G."/>
            <person name="Klis F.M."/>
        </authorList>
    </citation>
    <scope>IDENTIFICATION BY MASS SPECTROMETRY</scope>
    <scope>SUBCELLULAR LOCATION</scope>
    <scope>INDUCTION</scope>
</reference>
<dbReference type="EMBL" id="CP017624">
    <property type="protein sequence ID" value="AOW27875.1"/>
    <property type="molecule type" value="Genomic_DNA"/>
</dbReference>
<dbReference type="RefSeq" id="XP_712603.2">
    <property type="nucleotide sequence ID" value="XM_707510.2"/>
</dbReference>
<dbReference type="FunCoup" id="Q59SF7">
    <property type="interactions" value="83"/>
</dbReference>
<dbReference type="STRING" id="237561.Q59SF7"/>
<dbReference type="GlyCosmos" id="Q59SF7">
    <property type="glycosylation" value="1 site, No reported glycans"/>
</dbReference>
<dbReference type="EnsemblFungi" id="C2_08870C_A-T">
    <property type="protein sequence ID" value="C2_08870C_A-T-p1"/>
    <property type="gene ID" value="C2_08870C_A"/>
</dbReference>
<dbReference type="GeneID" id="3645801"/>
<dbReference type="KEGG" id="cal:CAALFM_C208870CA"/>
<dbReference type="CGD" id="CAL0000186859">
    <property type="gene designation" value="PIR1"/>
</dbReference>
<dbReference type="VEuPathDB" id="FungiDB:C2_08870C_A"/>
<dbReference type="HOGENOM" id="CLU_039662_0_0_1"/>
<dbReference type="InParanoid" id="Q59SF7"/>
<dbReference type="OrthoDB" id="5415592at2759"/>
<dbReference type="PRO" id="PR:Q59SF7"/>
<dbReference type="Proteomes" id="UP000000559">
    <property type="component" value="Chromosome 2"/>
</dbReference>
<dbReference type="GO" id="GO:0005576">
    <property type="term" value="C:extracellular region"/>
    <property type="evidence" value="ECO:0000314"/>
    <property type="project" value="CGD"/>
</dbReference>
<dbReference type="GO" id="GO:0062040">
    <property type="term" value="C:fungal biofilm matrix"/>
    <property type="evidence" value="ECO:0000314"/>
    <property type="project" value="CGD"/>
</dbReference>
<dbReference type="GO" id="GO:0009277">
    <property type="term" value="C:fungal-type cell wall"/>
    <property type="evidence" value="ECO:0000314"/>
    <property type="project" value="CGD"/>
</dbReference>
<dbReference type="GO" id="GO:0030445">
    <property type="term" value="C:yeast-form cell wall"/>
    <property type="evidence" value="ECO:0000314"/>
    <property type="project" value="CGD"/>
</dbReference>
<dbReference type="GO" id="GO:0005199">
    <property type="term" value="F:structural constituent of cell wall"/>
    <property type="evidence" value="ECO:0000315"/>
    <property type="project" value="CGD"/>
</dbReference>
<dbReference type="GO" id="GO:0071502">
    <property type="term" value="P:cellular response to temperature stimulus"/>
    <property type="evidence" value="ECO:0000314"/>
    <property type="project" value="CGD"/>
</dbReference>
<dbReference type="GO" id="GO:0031505">
    <property type="term" value="P:fungal-type cell wall organization"/>
    <property type="evidence" value="ECO:0000315"/>
    <property type="project" value="CGD"/>
</dbReference>
<dbReference type="InterPro" id="IPR054508">
    <property type="entry name" value="PIR1-like_C"/>
</dbReference>
<dbReference type="InterPro" id="IPR051153">
    <property type="entry name" value="Yeast_CWMannoprotein_PIR"/>
</dbReference>
<dbReference type="InterPro" id="IPR000420">
    <property type="entry name" value="Yeast_PIR_rpt"/>
</dbReference>
<dbReference type="PANTHER" id="PTHR47254">
    <property type="entry name" value="CELL WALL MANNOPROTEIN CIS3-RELATED"/>
    <property type="match status" value="1"/>
</dbReference>
<dbReference type="PANTHER" id="PTHR47254:SF1">
    <property type="entry name" value="CELL WALL MANNOPROTEIN CIS3-RELATED"/>
    <property type="match status" value="1"/>
</dbReference>
<dbReference type="Pfam" id="PF22799">
    <property type="entry name" value="PIR1-like_C"/>
    <property type="match status" value="1"/>
</dbReference>
<dbReference type="PROSITE" id="PS50256">
    <property type="entry name" value="PIR_REPEAT_2"/>
    <property type="match status" value="5"/>
</dbReference>
<evidence type="ECO:0000250" key="1"/>
<evidence type="ECO:0000255" key="2"/>
<evidence type="ECO:0000255" key="3">
    <source>
        <dbReference type="PROSITE-ProRule" id="PRU00149"/>
    </source>
</evidence>
<evidence type="ECO:0000256" key="4">
    <source>
        <dbReference type="SAM" id="MobiDB-lite"/>
    </source>
</evidence>
<evidence type="ECO:0000269" key="5">
    <source>
    </source>
</evidence>
<evidence type="ECO:0000269" key="6">
    <source>
    </source>
</evidence>
<evidence type="ECO:0000269" key="7">
    <source>
    </source>
</evidence>
<evidence type="ECO:0000269" key="8">
    <source>
    </source>
</evidence>
<evidence type="ECO:0000269" key="9">
    <source>
    </source>
</evidence>
<evidence type="ECO:0000269" key="10">
    <source>
    </source>
</evidence>
<evidence type="ECO:0000269" key="11">
    <source>
    </source>
</evidence>
<evidence type="ECO:0000269" key="12">
    <source>
    </source>
</evidence>
<evidence type="ECO:0000269" key="13">
    <source>
    </source>
</evidence>
<evidence type="ECO:0000269" key="14">
    <source>
    </source>
</evidence>
<evidence type="ECO:0000269" key="15">
    <source>
    </source>
</evidence>
<evidence type="ECO:0000269" key="16">
    <source>
    </source>
</evidence>
<evidence type="ECO:0000269" key="17">
    <source>
    </source>
</evidence>
<evidence type="ECO:0000305" key="18"/>